<comment type="function">
    <text evidence="1">One of the primary rRNA binding proteins, it binds directly to 16S rRNA where it helps nucleate assembly of the platform of the 30S subunit by binding and bridging several RNA helices of the 16S rRNA.</text>
</comment>
<comment type="function">
    <text evidence="1">Forms an intersubunit bridge (bridge B4) with the 23S rRNA of the 50S subunit in the ribosome.</text>
</comment>
<comment type="subunit">
    <text evidence="1">Part of the 30S ribosomal subunit. Forms a bridge to the 50S subunit in the 70S ribosome, contacting the 23S rRNA.</text>
</comment>
<comment type="similarity">
    <text evidence="1">Belongs to the universal ribosomal protein uS15 family.</text>
</comment>
<accession>A8L6G0</accession>
<gene>
    <name evidence="1" type="primary">rpsO</name>
    <name type="ordered locus">Franean1_1188</name>
</gene>
<organism>
    <name type="scientific">Parafrankia sp. (strain EAN1pec)</name>
    <dbReference type="NCBI Taxonomy" id="298653"/>
    <lineage>
        <taxon>Bacteria</taxon>
        <taxon>Bacillati</taxon>
        <taxon>Actinomycetota</taxon>
        <taxon>Actinomycetes</taxon>
        <taxon>Frankiales</taxon>
        <taxon>Frankiaceae</taxon>
        <taxon>Parafrankia</taxon>
    </lineage>
</organism>
<name>RS15_PARS2</name>
<evidence type="ECO:0000255" key="1">
    <source>
        <dbReference type="HAMAP-Rule" id="MF_01343"/>
    </source>
</evidence>
<evidence type="ECO:0000305" key="2"/>
<reference key="1">
    <citation type="journal article" date="2007" name="Genome Res.">
        <title>Genome characteristics of facultatively symbiotic Frankia sp. strains reflect host range and host plant biogeography.</title>
        <authorList>
            <person name="Normand P."/>
            <person name="Lapierre P."/>
            <person name="Tisa L.S."/>
            <person name="Gogarten J.P."/>
            <person name="Alloisio N."/>
            <person name="Bagnarol E."/>
            <person name="Bassi C.A."/>
            <person name="Berry A.M."/>
            <person name="Bickhart D.M."/>
            <person name="Choisne N."/>
            <person name="Couloux A."/>
            <person name="Cournoyer B."/>
            <person name="Cruveiller S."/>
            <person name="Daubin V."/>
            <person name="Demange N."/>
            <person name="Francino M.P."/>
            <person name="Goltsman E."/>
            <person name="Huang Y."/>
            <person name="Kopp O.R."/>
            <person name="Labarre L."/>
            <person name="Lapidus A."/>
            <person name="Lavire C."/>
            <person name="Marechal J."/>
            <person name="Martinez M."/>
            <person name="Mastronunzio J.E."/>
            <person name="Mullin B.C."/>
            <person name="Niemann J."/>
            <person name="Pujic P."/>
            <person name="Rawnsley T."/>
            <person name="Rouy Z."/>
            <person name="Schenowitz C."/>
            <person name="Sellstedt A."/>
            <person name="Tavares F."/>
            <person name="Tomkins J.P."/>
            <person name="Vallenet D."/>
            <person name="Valverde C."/>
            <person name="Wall L.G."/>
            <person name="Wang Y."/>
            <person name="Medigue C."/>
            <person name="Benson D.R."/>
        </authorList>
    </citation>
    <scope>NUCLEOTIDE SEQUENCE [LARGE SCALE GENOMIC DNA]</scope>
    <source>
        <strain>EAN1pec</strain>
    </source>
</reference>
<dbReference type="EMBL" id="CP000820">
    <property type="protein sequence ID" value="ABW10642.1"/>
    <property type="molecule type" value="Genomic_DNA"/>
</dbReference>
<dbReference type="RefSeq" id="WP_020458818.1">
    <property type="nucleotide sequence ID" value="NC_009921.1"/>
</dbReference>
<dbReference type="SMR" id="A8L6G0"/>
<dbReference type="STRING" id="298653.Franean1_1188"/>
<dbReference type="KEGG" id="fre:Franean1_1188"/>
<dbReference type="eggNOG" id="COG0184">
    <property type="taxonomic scope" value="Bacteria"/>
</dbReference>
<dbReference type="HOGENOM" id="CLU_148518_0_0_11"/>
<dbReference type="GO" id="GO:0022627">
    <property type="term" value="C:cytosolic small ribosomal subunit"/>
    <property type="evidence" value="ECO:0007669"/>
    <property type="project" value="TreeGrafter"/>
</dbReference>
<dbReference type="GO" id="GO:0019843">
    <property type="term" value="F:rRNA binding"/>
    <property type="evidence" value="ECO:0007669"/>
    <property type="project" value="UniProtKB-UniRule"/>
</dbReference>
<dbReference type="GO" id="GO:0003735">
    <property type="term" value="F:structural constituent of ribosome"/>
    <property type="evidence" value="ECO:0007669"/>
    <property type="project" value="InterPro"/>
</dbReference>
<dbReference type="GO" id="GO:0006412">
    <property type="term" value="P:translation"/>
    <property type="evidence" value="ECO:0007669"/>
    <property type="project" value="UniProtKB-UniRule"/>
</dbReference>
<dbReference type="CDD" id="cd00353">
    <property type="entry name" value="Ribosomal_S15p_S13e"/>
    <property type="match status" value="1"/>
</dbReference>
<dbReference type="FunFam" id="1.10.287.10:FF:000002">
    <property type="entry name" value="30S ribosomal protein S15"/>
    <property type="match status" value="1"/>
</dbReference>
<dbReference type="Gene3D" id="6.10.250.3130">
    <property type="match status" value="1"/>
</dbReference>
<dbReference type="Gene3D" id="1.10.287.10">
    <property type="entry name" value="S15/NS1, RNA-binding"/>
    <property type="match status" value="1"/>
</dbReference>
<dbReference type="HAMAP" id="MF_01343_B">
    <property type="entry name" value="Ribosomal_uS15_B"/>
    <property type="match status" value="1"/>
</dbReference>
<dbReference type="InterPro" id="IPR000589">
    <property type="entry name" value="Ribosomal_uS15"/>
</dbReference>
<dbReference type="InterPro" id="IPR005290">
    <property type="entry name" value="Ribosomal_uS15_bac-type"/>
</dbReference>
<dbReference type="InterPro" id="IPR009068">
    <property type="entry name" value="uS15_NS1_RNA-bd_sf"/>
</dbReference>
<dbReference type="NCBIfam" id="TIGR00952">
    <property type="entry name" value="S15_bact"/>
    <property type="match status" value="1"/>
</dbReference>
<dbReference type="PANTHER" id="PTHR23321">
    <property type="entry name" value="RIBOSOMAL PROTEIN S15, BACTERIAL AND ORGANELLAR"/>
    <property type="match status" value="1"/>
</dbReference>
<dbReference type="PANTHER" id="PTHR23321:SF26">
    <property type="entry name" value="SMALL RIBOSOMAL SUBUNIT PROTEIN US15M"/>
    <property type="match status" value="1"/>
</dbReference>
<dbReference type="Pfam" id="PF00312">
    <property type="entry name" value="Ribosomal_S15"/>
    <property type="match status" value="1"/>
</dbReference>
<dbReference type="SMART" id="SM01387">
    <property type="entry name" value="Ribosomal_S15"/>
    <property type="match status" value="1"/>
</dbReference>
<dbReference type="SUPFAM" id="SSF47060">
    <property type="entry name" value="S15/NS1 RNA-binding domain"/>
    <property type="match status" value="1"/>
</dbReference>
<dbReference type="PROSITE" id="PS00362">
    <property type="entry name" value="RIBOSOMAL_S15"/>
    <property type="match status" value="1"/>
</dbReference>
<proteinExistence type="inferred from homology"/>
<keyword id="KW-0687">Ribonucleoprotein</keyword>
<keyword id="KW-0689">Ribosomal protein</keyword>
<keyword id="KW-0694">RNA-binding</keyword>
<keyword id="KW-0699">rRNA-binding</keyword>
<protein>
    <recommendedName>
        <fullName evidence="1">Small ribosomal subunit protein uS15</fullName>
    </recommendedName>
    <alternativeName>
        <fullName evidence="2">30S ribosomal protein S15</fullName>
    </alternativeName>
</protein>
<sequence length="89" mass="10428">MPLSGDVKQKIMSDYATVDRDTGSPEVQVAMLTRRISDLTEHLKVHKHDHHSRRGLLLLVGRRRRLLNYLAKTDINRYRALIERLGLRR</sequence>
<feature type="chain" id="PRO_1000143119" description="Small ribosomal subunit protein uS15">
    <location>
        <begin position="1"/>
        <end position="89"/>
    </location>
</feature>